<gene>
    <name type="primary">HBA</name>
</gene>
<proteinExistence type="evidence at protein level"/>
<sequence>MVLSSADKNNVKACWGKIGSHAGEYGAEALERTFCSFPTTKTYFPHFDLSHGSAQVQAHGQKVADALTKAVVHINDLPNALSDLSDLHAYKLRVDPVNFKFLSHCLLVTLACHHPEEFTPAVHASLDKFFSAVSTVLTSKYR</sequence>
<protein>
    <recommendedName>
        <fullName>Hemoglobin subunit alpha</fullName>
    </recommendedName>
    <alternativeName>
        <fullName>Alpha-globin</fullName>
    </alternativeName>
    <alternativeName>
        <fullName>Hemoglobin alpha chain</fullName>
    </alternativeName>
    <component>
        <recommendedName>
            <fullName evidence="2">Hemopressin</fullName>
        </recommendedName>
    </component>
</protein>
<accession>P18975</accession>
<organism>
    <name type="scientific">Panthera leo</name>
    <name type="common">Lion</name>
    <dbReference type="NCBI Taxonomy" id="9689"/>
    <lineage>
        <taxon>Eukaryota</taxon>
        <taxon>Metazoa</taxon>
        <taxon>Chordata</taxon>
        <taxon>Craniata</taxon>
        <taxon>Vertebrata</taxon>
        <taxon>Euteleostomi</taxon>
        <taxon>Mammalia</taxon>
        <taxon>Eutheria</taxon>
        <taxon>Laurasiatheria</taxon>
        <taxon>Carnivora</taxon>
        <taxon>Feliformia</taxon>
        <taxon>Felidae</taxon>
        <taxon>Pantherinae</taxon>
        <taxon>Panthera</taxon>
    </lineage>
</organism>
<evidence type="ECO:0000250" key="1">
    <source>
        <dbReference type="UniProtKB" id="P01942"/>
    </source>
</evidence>
<evidence type="ECO:0000250" key="2">
    <source>
        <dbReference type="UniProtKB" id="P01946"/>
    </source>
</evidence>
<evidence type="ECO:0000250" key="3">
    <source>
        <dbReference type="UniProtKB" id="P69905"/>
    </source>
</evidence>
<evidence type="ECO:0000255" key="4">
    <source>
        <dbReference type="PROSITE-ProRule" id="PRU00238"/>
    </source>
</evidence>
<evidence type="ECO:0000269" key="5">
    <source ref="1"/>
</evidence>
<feature type="initiator methionine" description="Removed" evidence="5">
    <location>
        <position position="1"/>
    </location>
</feature>
<feature type="chain" id="PRO_0000052715" description="Hemoglobin subunit alpha">
    <location>
        <begin position="2"/>
        <end position="142"/>
    </location>
</feature>
<feature type="peptide" id="PRO_0000455915" description="Hemopressin" evidence="2">
    <location>
        <begin position="96"/>
        <end position="104"/>
    </location>
</feature>
<feature type="domain" description="Globin" evidence="4">
    <location>
        <begin position="2"/>
        <end position="142"/>
    </location>
</feature>
<feature type="binding site" evidence="4">
    <location>
        <position position="59"/>
    </location>
    <ligand>
        <name>O2</name>
        <dbReference type="ChEBI" id="CHEBI:15379"/>
    </ligand>
</feature>
<feature type="binding site" description="proximal binding residue" evidence="4">
    <location>
        <position position="88"/>
    </location>
    <ligand>
        <name>heme b</name>
        <dbReference type="ChEBI" id="CHEBI:60344"/>
    </ligand>
    <ligandPart>
        <name>Fe</name>
        <dbReference type="ChEBI" id="CHEBI:18248"/>
    </ligandPart>
</feature>
<feature type="modified residue" description="Phosphoserine" evidence="3">
    <location>
        <position position="4"/>
    </location>
</feature>
<feature type="modified residue" description="N6-succinyllysine" evidence="1">
    <location>
        <position position="8"/>
    </location>
</feature>
<feature type="modified residue" description="N6-succinyllysine" evidence="1">
    <location>
        <position position="12"/>
    </location>
</feature>
<feature type="modified residue" description="N6-acetyllysine; alternate" evidence="3">
    <location>
        <position position="17"/>
    </location>
</feature>
<feature type="modified residue" description="N6-succinyllysine; alternate" evidence="1">
    <location>
        <position position="17"/>
    </location>
</feature>
<feature type="modified residue" description="Phosphotyrosine" evidence="3">
    <location>
        <position position="25"/>
    </location>
</feature>
<feature type="modified residue" description="Phosphoserine" evidence="3">
    <location>
        <position position="36"/>
    </location>
</feature>
<feature type="modified residue" description="N6-succinyllysine" evidence="1">
    <location>
        <position position="41"/>
    </location>
</feature>
<feature type="modified residue" description="Phosphoserine" evidence="3">
    <location>
        <position position="50"/>
    </location>
</feature>
<feature type="modified residue" description="Phosphoserine" evidence="1">
    <location>
        <position position="103"/>
    </location>
</feature>
<feature type="modified residue" description="Phosphothreonine" evidence="1">
    <location>
        <position position="109"/>
    </location>
</feature>
<feature type="modified residue" description="Phosphoserine" evidence="1">
    <location>
        <position position="125"/>
    </location>
</feature>
<feature type="modified residue" description="Phosphothreonine" evidence="1">
    <location>
        <position position="135"/>
    </location>
</feature>
<feature type="modified residue" description="Phosphothreonine" evidence="1">
    <location>
        <position position="138"/>
    </location>
</feature>
<feature type="modified residue" description="Phosphoserine" evidence="1">
    <location>
        <position position="139"/>
    </location>
</feature>
<comment type="function">
    <text>Involved in oxygen transport from the lung to the various peripheral tissues.</text>
</comment>
<comment type="function">
    <molecule>Hemopressin</molecule>
    <text evidence="2">Hemopressin acts as an antagonist peptide of the cannabinoid receptor CNR1. Hemopressin-binding efficiently blocks cannabinoid receptor CNR1 and subsequent signaling.</text>
</comment>
<comment type="subunit">
    <text>Heterotetramer of two alpha chains and two beta chains.</text>
</comment>
<comment type="tissue specificity">
    <text>Red blood cells.</text>
</comment>
<comment type="similarity">
    <text evidence="4">Belongs to the globin family.</text>
</comment>
<dbReference type="PIR" id="S03924">
    <property type="entry name" value="HAJL"/>
</dbReference>
<dbReference type="SMR" id="P18975"/>
<dbReference type="Proteomes" id="UP000694399">
    <property type="component" value="Unplaced"/>
</dbReference>
<dbReference type="GO" id="GO:0072562">
    <property type="term" value="C:blood microparticle"/>
    <property type="evidence" value="ECO:0007669"/>
    <property type="project" value="TreeGrafter"/>
</dbReference>
<dbReference type="GO" id="GO:0031838">
    <property type="term" value="C:haptoglobin-hemoglobin complex"/>
    <property type="evidence" value="ECO:0007669"/>
    <property type="project" value="TreeGrafter"/>
</dbReference>
<dbReference type="GO" id="GO:0005833">
    <property type="term" value="C:hemoglobin complex"/>
    <property type="evidence" value="ECO:0007669"/>
    <property type="project" value="InterPro"/>
</dbReference>
<dbReference type="GO" id="GO:0031720">
    <property type="term" value="F:haptoglobin binding"/>
    <property type="evidence" value="ECO:0007669"/>
    <property type="project" value="TreeGrafter"/>
</dbReference>
<dbReference type="GO" id="GO:0020037">
    <property type="term" value="F:heme binding"/>
    <property type="evidence" value="ECO:0007669"/>
    <property type="project" value="InterPro"/>
</dbReference>
<dbReference type="GO" id="GO:0005506">
    <property type="term" value="F:iron ion binding"/>
    <property type="evidence" value="ECO:0007669"/>
    <property type="project" value="InterPro"/>
</dbReference>
<dbReference type="GO" id="GO:0043177">
    <property type="term" value="F:organic acid binding"/>
    <property type="evidence" value="ECO:0007669"/>
    <property type="project" value="TreeGrafter"/>
</dbReference>
<dbReference type="GO" id="GO:0019825">
    <property type="term" value="F:oxygen binding"/>
    <property type="evidence" value="ECO:0007669"/>
    <property type="project" value="InterPro"/>
</dbReference>
<dbReference type="GO" id="GO:0005344">
    <property type="term" value="F:oxygen carrier activity"/>
    <property type="evidence" value="ECO:0007669"/>
    <property type="project" value="UniProtKB-KW"/>
</dbReference>
<dbReference type="GO" id="GO:0004601">
    <property type="term" value="F:peroxidase activity"/>
    <property type="evidence" value="ECO:0007669"/>
    <property type="project" value="TreeGrafter"/>
</dbReference>
<dbReference type="GO" id="GO:0042744">
    <property type="term" value="P:hydrogen peroxide catabolic process"/>
    <property type="evidence" value="ECO:0007669"/>
    <property type="project" value="TreeGrafter"/>
</dbReference>
<dbReference type="CDD" id="cd08927">
    <property type="entry name" value="Hb-alpha-like"/>
    <property type="match status" value="1"/>
</dbReference>
<dbReference type="FunFam" id="1.10.490.10:FF:000002">
    <property type="entry name" value="Hemoglobin subunit alpha"/>
    <property type="match status" value="1"/>
</dbReference>
<dbReference type="Gene3D" id="1.10.490.10">
    <property type="entry name" value="Globins"/>
    <property type="match status" value="1"/>
</dbReference>
<dbReference type="InterPro" id="IPR000971">
    <property type="entry name" value="Globin"/>
</dbReference>
<dbReference type="InterPro" id="IPR009050">
    <property type="entry name" value="Globin-like_sf"/>
</dbReference>
<dbReference type="InterPro" id="IPR012292">
    <property type="entry name" value="Globin/Proto"/>
</dbReference>
<dbReference type="InterPro" id="IPR002338">
    <property type="entry name" value="Hemoglobin_a-typ"/>
</dbReference>
<dbReference type="InterPro" id="IPR050056">
    <property type="entry name" value="Hemoglobin_oxygen_transport"/>
</dbReference>
<dbReference type="InterPro" id="IPR002339">
    <property type="entry name" value="Hemoglobin_pi"/>
</dbReference>
<dbReference type="PANTHER" id="PTHR11442">
    <property type="entry name" value="HEMOGLOBIN FAMILY MEMBER"/>
    <property type="match status" value="1"/>
</dbReference>
<dbReference type="PANTHER" id="PTHR11442:SF48">
    <property type="entry name" value="HEMOGLOBIN SUBUNIT ALPHA"/>
    <property type="match status" value="1"/>
</dbReference>
<dbReference type="Pfam" id="PF00042">
    <property type="entry name" value="Globin"/>
    <property type="match status" value="1"/>
</dbReference>
<dbReference type="PRINTS" id="PR00612">
    <property type="entry name" value="ALPHAHAEM"/>
</dbReference>
<dbReference type="PRINTS" id="PR00815">
    <property type="entry name" value="PIHAEM"/>
</dbReference>
<dbReference type="SUPFAM" id="SSF46458">
    <property type="entry name" value="Globin-like"/>
    <property type="match status" value="1"/>
</dbReference>
<dbReference type="PROSITE" id="PS01033">
    <property type="entry name" value="GLOBIN"/>
    <property type="match status" value="1"/>
</dbReference>
<keyword id="KW-0007">Acetylation</keyword>
<keyword id="KW-0903">Direct protein sequencing</keyword>
<keyword id="KW-0349">Heme</keyword>
<keyword id="KW-0408">Iron</keyword>
<keyword id="KW-0479">Metal-binding</keyword>
<keyword id="KW-0561">Oxygen transport</keyword>
<keyword id="KW-0597">Phosphoprotein</keyword>
<keyword id="KW-1185">Reference proteome</keyword>
<keyword id="KW-0813">Transport</keyword>
<reference key="1">
    <citation type="journal article" date="1987" name="Z. Naturforsch. C">
        <title>Carnivora: the primary structures of adult lion (Panthera leo) hemoglobins.</title>
        <authorList>
            <person name="Jahan M."/>
            <person name="Ahmed A."/>
            <person name="Braunitzer G."/>
            <person name="Zaidi Z.H."/>
            <person name="Goeltenboth R."/>
        </authorList>
    </citation>
    <scope>PROTEIN SEQUENCE OF 2-142</scope>
</reference>
<name>HBA_PANLE</name>